<gene>
    <name type="primary">RFT1</name>
    <name type="ordered locus">YALI0E06721g</name>
</gene>
<evidence type="ECO:0000250" key="1">
    <source>
        <dbReference type="UniProtKB" id="P38206"/>
    </source>
</evidence>
<evidence type="ECO:0000255" key="2"/>
<evidence type="ECO:0000256" key="3">
    <source>
        <dbReference type="SAM" id="MobiDB-lite"/>
    </source>
</evidence>
<evidence type="ECO:0000305" key="4"/>
<feature type="chain" id="PRO_0000212419" description="Man(5)GlcNAc(2)-PP-dolichol translocation protein RFT1">
    <location>
        <begin position="1"/>
        <end position="673"/>
    </location>
</feature>
<feature type="transmembrane region" description="Helical" evidence="2">
    <location>
        <begin position="192"/>
        <end position="212"/>
    </location>
</feature>
<feature type="transmembrane region" description="Helical" evidence="2">
    <location>
        <begin position="216"/>
        <end position="236"/>
    </location>
</feature>
<feature type="transmembrane region" description="Helical" evidence="2">
    <location>
        <begin position="257"/>
        <end position="277"/>
    </location>
</feature>
<feature type="transmembrane region" description="Helical" evidence="2">
    <location>
        <begin position="288"/>
        <end position="308"/>
    </location>
</feature>
<feature type="transmembrane region" description="Helical" evidence="2">
    <location>
        <begin position="450"/>
        <end position="470"/>
    </location>
</feature>
<feature type="transmembrane region" description="Helical" evidence="2">
    <location>
        <begin position="486"/>
        <end position="506"/>
    </location>
</feature>
<feature type="transmembrane region" description="Helical" evidence="2">
    <location>
        <begin position="524"/>
        <end position="544"/>
    </location>
</feature>
<feature type="transmembrane region" description="Helical" evidence="2">
    <location>
        <begin position="550"/>
        <end position="570"/>
    </location>
</feature>
<feature type="transmembrane region" description="Helical" evidence="2">
    <location>
        <begin position="588"/>
        <end position="608"/>
    </location>
</feature>
<feature type="transmembrane region" description="Helical" evidence="2">
    <location>
        <begin position="613"/>
        <end position="633"/>
    </location>
</feature>
<feature type="region of interest" description="Disordered" evidence="3">
    <location>
        <begin position="1"/>
        <end position="96"/>
    </location>
</feature>
<feature type="region of interest" description="Disordered" evidence="3">
    <location>
        <begin position="651"/>
        <end position="673"/>
    </location>
</feature>
<feature type="compositionally biased region" description="Basic and acidic residues" evidence="3">
    <location>
        <begin position="1"/>
        <end position="11"/>
    </location>
</feature>
<dbReference type="EMBL" id="CR382131">
    <property type="protein sequence ID" value="CAG79221.1"/>
    <property type="molecule type" value="Genomic_DNA"/>
</dbReference>
<dbReference type="RefSeq" id="XP_503639.1">
    <property type="nucleotide sequence ID" value="XM_503639.1"/>
</dbReference>
<dbReference type="SMR" id="Q6C6S3"/>
<dbReference type="FunCoup" id="Q6C6S3">
    <property type="interactions" value="720"/>
</dbReference>
<dbReference type="STRING" id="284591.Q6C6S3"/>
<dbReference type="EnsemblFungi" id="CAG79221">
    <property type="protein sequence ID" value="CAG79221"/>
    <property type="gene ID" value="YALI0_E06721g"/>
</dbReference>
<dbReference type="KEGG" id="yli:2912408"/>
<dbReference type="VEuPathDB" id="FungiDB:YALI0_E06721g"/>
<dbReference type="HOGENOM" id="CLU_023360_3_0_1"/>
<dbReference type="InParanoid" id="Q6C6S3"/>
<dbReference type="OMA" id="WPGKLFG"/>
<dbReference type="OrthoDB" id="18395at4891"/>
<dbReference type="UniPathway" id="UPA00378"/>
<dbReference type="Proteomes" id="UP000001300">
    <property type="component" value="Chromosome E"/>
</dbReference>
<dbReference type="GO" id="GO:0005789">
    <property type="term" value="C:endoplasmic reticulum membrane"/>
    <property type="evidence" value="ECO:0000318"/>
    <property type="project" value="GO_Central"/>
</dbReference>
<dbReference type="GO" id="GO:0006488">
    <property type="term" value="P:dolichol-linked oligosaccharide biosynthetic process"/>
    <property type="evidence" value="ECO:0000250"/>
    <property type="project" value="UniProtKB"/>
</dbReference>
<dbReference type="GO" id="GO:0034203">
    <property type="term" value="P:glycolipid translocation"/>
    <property type="evidence" value="ECO:0000250"/>
    <property type="project" value="UniProtKB"/>
</dbReference>
<dbReference type="GO" id="GO:0006487">
    <property type="term" value="P:protein N-linked glycosylation"/>
    <property type="evidence" value="ECO:0000250"/>
    <property type="project" value="UniProtKB"/>
</dbReference>
<dbReference type="CDD" id="cd13130">
    <property type="entry name" value="MATE_rft1"/>
    <property type="match status" value="1"/>
</dbReference>
<dbReference type="InterPro" id="IPR007594">
    <property type="entry name" value="RFT1"/>
</dbReference>
<dbReference type="PANTHER" id="PTHR13117">
    <property type="entry name" value="ENDOPLASMIC RETICULUM MULTISPAN TRANSMEMBRANE PROTEIN-RELATED"/>
    <property type="match status" value="1"/>
</dbReference>
<dbReference type="PANTHER" id="PTHR13117:SF5">
    <property type="entry name" value="PROTEIN RFT1 HOMOLOG"/>
    <property type="match status" value="1"/>
</dbReference>
<dbReference type="Pfam" id="PF04506">
    <property type="entry name" value="Rft-1"/>
    <property type="match status" value="1"/>
</dbReference>
<sequence>MDELPSHEPKNRYSRSSSIGSPADARYAPPSPLHEPSDASQIAIAMGGVRQRSASIRKHRRQQPSQVFIPPMHENVTAPRDEHEPKMSSPVPETDEKPLLQTSAAGATLLIGIQILSKLASFGLNQMLLLVATPALFGANAQLEFVLNTVLFFSREAVRLALQRLTLAGKKPDVYVFGGGVVQDTVSGTSQAVINMGYISVLLGVFFSSVAAASHSLFSVAYASWAVQLVCIAAMVDLASEPYYVLAMQQLRFRSRAAAEAVAILVRCVVTFSFTLLAKDTDGGLNGGVLAFAFGQLAYSLISSAVYIYTVRQDNRDRQFSFRPQKIQPFESQMEMSDNNRDVITHNASPYYLDKPTVRLAGSIWIQTVFKHCLTEGDRILVSYFLPLYDQGVYAIVLNYGSLVARIVFFPIEEGLRTFFSNLLGEKPSETALKLSRQVLCSVVRIYTYVALFAAGFGPTTLPFIFGTLLGARGGQWSEGAPSRSAPAVMGAFALYIPFMALNGALESFVQSVATPADLRRQAVALGVFSVVFATVGGLLMKTMDLGARGLVFANIVNMTLRIGWSVVFIYHYYVSHKAENVNPTHLLPGKLVIATGVTTILASLFGVGRVSSFRDVGINIGLALALAAAIAVEERQALVQLVQLVRKKEDKVKVDDKEEKEKESDKSEGESE</sequence>
<organism>
    <name type="scientific">Yarrowia lipolytica (strain CLIB 122 / E 150)</name>
    <name type="common">Yeast</name>
    <name type="synonym">Candida lipolytica</name>
    <dbReference type="NCBI Taxonomy" id="284591"/>
    <lineage>
        <taxon>Eukaryota</taxon>
        <taxon>Fungi</taxon>
        <taxon>Dikarya</taxon>
        <taxon>Ascomycota</taxon>
        <taxon>Saccharomycotina</taxon>
        <taxon>Dipodascomycetes</taxon>
        <taxon>Dipodascales</taxon>
        <taxon>Dipodascales incertae sedis</taxon>
        <taxon>Yarrowia</taxon>
    </lineage>
</organism>
<keyword id="KW-0256">Endoplasmic reticulum</keyword>
<keyword id="KW-0472">Membrane</keyword>
<keyword id="KW-1185">Reference proteome</keyword>
<keyword id="KW-0762">Sugar transport</keyword>
<keyword id="KW-0812">Transmembrane</keyword>
<keyword id="KW-1133">Transmembrane helix</keyword>
<keyword id="KW-0813">Transport</keyword>
<proteinExistence type="inferred from homology"/>
<protein>
    <recommendedName>
        <fullName evidence="1">Man(5)GlcNAc(2)-PP-dolichol translocation protein RFT1</fullName>
    </recommendedName>
</protein>
<reference key="1">
    <citation type="journal article" date="2004" name="Nature">
        <title>Genome evolution in yeasts.</title>
        <authorList>
            <person name="Dujon B."/>
            <person name="Sherman D."/>
            <person name="Fischer G."/>
            <person name="Durrens P."/>
            <person name="Casaregola S."/>
            <person name="Lafontaine I."/>
            <person name="de Montigny J."/>
            <person name="Marck C."/>
            <person name="Neuveglise C."/>
            <person name="Talla E."/>
            <person name="Goffard N."/>
            <person name="Frangeul L."/>
            <person name="Aigle M."/>
            <person name="Anthouard V."/>
            <person name="Babour A."/>
            <person name="Barbe V."/>
            <person name="Barnay S."/>
            <person name="Blanchin S."/>
            <person name="Beckerich J.-M."/>
            <person name="Beyne E."/>
            <person name="Bleykasten C."/>
            <person name="Boisrame A."/>
            <person name="Boyer J."/>
            <person name="Cattolico L."/>
            <person name="Confanioleri F."/>
            <person name="de Daruvar A."/>
            <person name="Despons L."/>
            <person name="Fabre E."/>
            <person name="Fairhead C."/>
            <person name="Ferry-Dumazet H."/>
            <person name="Groppi A."/>
            <person name="Hantraye F."/>
            <person name="Hennequin C."/>
            <person name="Jauniaux N."/>
            <person name="Joyet P."/>
            <person name="Kachouri R."/>
            <person name="Kerrest A."/>
            <person name="Koszul R."/>
            <person name="Lemaire M."/>
            <person name="Lesur I."/>
            <person name="Ma L."/>
            <person name="Muller H."/>
            <person name="Nicaud J.-M."/>
            <person name="Nikolski M."/>
            <person name="Oztas S."/>
            <person name="Ozier-Kalogeropoulos O."/>
            <person name="Pellenz S."/>
            <person name="Potier S."/>
            <person name="Richard G.-F."/>
            <person name="Straub M.-L."/>
            <person name="Suleau A."/>
            <person name="Swennen D."/>
            <person name="Tekaia F."/>
            <person name="Wesolowski-Louvel M."/>
            <person name="Westhof E."/>
            <person name="Wirth B."/>
            <person name="Zeniou-Meyer M."/>
            <person name="Zivanovic Y."/>
            <person name="Bolotin-Fukuhara M."/>
            <person name="Thierry A."/>
            <person name="Bouchier C."/>
            <person name="Caudron B."/>
            <person name="Scarpelli C."/>
            <person name="Gaillardin C."/>
            <person name="Weissenbach J."/>
            <person name="Wincker P."/>
            <person name="Souciet J.-L."/>
        </authorList>
    </citation>
    <scope>NUCLEOTIDE SEQUENCE [LARGE SCALE GENOMIC DNA]</scope>
    <source>
        <strain>CLIB 122 / E 150</strain>
    </source>
</reference>
<name>RFT1_YARLI</name>
<comment type="function">
    <text evidence="1">Intramembrane glycolipid transporter that operates in the biosynthetic pathway of dolichol-linked oligosaccharides, the glycan precursors employed in protein asparagine (N)-glycosylation. The sequential addition of sugars to dolichol pyrophosphate produces dolichol-linked oligosaccharides containing fourteen sugars, including two GlcNAcs, nine mannoses and three glucoses. Once assembled, the oligosaccharide is transferred from the lipid to nascent proteins by oligosaccharyltransferases. The assembly of dolichol-linked oligosaccharides begins on the cytosolic side of the endoplasmic reticulum membrane and finishes in its lumen. RFT1 could mediate the translocation of the cytosolically oriented intermediate DolPP-GlcNAc2Man5, produced by ALG11, into the ER lumen where dolichol-linked oligosaccharides assembly continues. However, the intramembrane lipid transporter activity could not be confirmed in vitro.</text>
</comment>
<comment type="pathway">
    <text evidence="1">Protein modification; protein glycosylation.</text>
</comment>
<comment type="subcellular location">
    <subcellularLocation>
        <location evidence="1">Endoplasmic reticulum membrane</location>
        <topology evidence="2">Multi-pass membrane protein</topology>
    </subcellularLocation>
</comment>
<comment type="similarity">
    <text evidence="4">Belongs to the RFT1 family.</text>
</comment>
<accession>Q6C6S3</accession>